<reference key="1">
    <citation type="journal article" date="1988" name="Nucleic Acids Res.">
        <title>Sequence of the Penicillium chrysogenum phosphoglycerate kinase gene.</title>
        <authorList>
            <person name="van Solingen P."/>
            <person name="Muurling H."/>
            <person name="Koekman B."/>
            <person name="van den Berg J."/>
        </authorList>
    </citation>
    <scope>NUCLEOTIDE SEQUENCE [GENOMIC DNA]</scope>
    <source>
        <strain>GB 533</strain>
    </source>
</reference>
<reference key="2">
    <citation type="journal article" date="1994" name="Mol. Gen. Genet.">
        <title>Expression of the 3-phosphoglycerate kinase gene (pgkA) of Penicillium chrysogenum.</title>
        <authorList>
            <person name="Hoskins I.C."/>
            <person name="Roberts C.F."/>
        </authorList>
    </citation>
    <scope>NUCLEOTIDE SEQUENCE [GENOMIC DNA] OF 1-22 AND 401-415</scope>
    <source>
        <strain>ATCC 9480 / CBS 307.48 / NRRL 1951 / GB8 / QM 941</strain>
    </source>
</reference>
<evidence type="ECO:0000250" key="1">
    <source>
        <dbReference type="UniProtKB" id="A0A7G5KET3"/>
    </source>
</evidence>
<evidence type="ECO:0000250" key="2">
    <source>
        <dbReference type="UniProtKB" id="P00558"/>
    </source>
</evidence>
<evidence type="ECO:0000250" key="3">
    <source>
        <dbReference type="UniProtKB" id="P00560"/>
    </source>
</evidence>
<evidence type="ECO:0000250" key="4">
    <source>
        <dbReference type="UniProtKB" id="Q7SIB7"/>
    </source>
</evidence>
<evidence type="ECO:0000305" key="5"/>
<protein>
    <recommendedName>
        <fullName>Phosphoglycerate kinase</fullName>
        <ecNumber>2.7.2.3</ecNumber>
    </recommendedName>
</protein>
<organism>
    <name type="scientific">Penicillium chrysogenum</name>
    <name type="common">Penicillium notatum</name>
    <dbReference type="NCBI Taxonomy" id="5076"/>
    <lineage>
        <taxon>Eukaryota</taxon>
        <taxon>Fungi</taxon>
        <taxon>Dikarya</taxon>
        <taxon>Ascomycota</taxon>
        <taxon>Pezizomycotina</taxon>
        <taxon>Eurotiomycetes</taxon>
        <taxon>Eurotiomycetidae</taxon>
        <taxon>Eurotiales</taxon>
        <taxon>Aspergillaceae</taxon>
        <taxon>Penicillium</taxon>
        <taxon>Penicillium chrysogenum species complex</taxon>
    </lineage>
</organism>
<name>PGK_PENCH</name>
<dbReference type="EC" id="2.7.2.3"/>
<dbReference type="EMBL" id="X13379">
    <property type="protein sequence ID" value="CAA31756.1"/>
    <property type="molecule type" value="Genomic_DNA"/>
</dbReference>
<dbReference type="EMBL" id="AH004545">
    <property type="protein sequence ID" value="AAB30809.1"/>
    <property type="molecule type" value="Genomic_DNA"/>
</dbReference>
<dbReference type="EMBL" id="AH004545">
    <property type="protein sequence ID" value="AAB30810.1"/>
    <property type="molecule type" value="Genomic_DNA"/>
</dbReference>
<dbReference type="PIR" id="S02040">
    <property type="entry name" value="TVPLGC"/>
</dbReference>
<dbReference type="SMR" id="P09188"/>
<dbReference type="UniPathway" id="UPA00109">
    <property type="reaction ID" value="UER00185"/>
</dbReference>
<dbReference type="GO" id="GO:0005829">
    <property type="term" value="C:cytosol"/>
    <property type="evidence" value="ECO:0007669"/>
    <property type="project" value="TreeGrafter"/>
</dbReference>
<dbReference type="GO" id="GO:0005739">
    <property type="term" value="C:mitochondrion"/>
    <property type="evidence" value="ECO:0007669"/>
    <property type="project" value="UniProtKB-SubCell"/>
</dbReference>
<dbReference type="GO" id="GO:0043531">
    <property type="term" value="F:ADP binding"/>
    <property type="evidence" value="ECO:0007669"/>
    <property type="project" value="TreeGrafter"/>
</dbReference>
<dbReference type="GO" id="GO:0005524">
    <property type="term" value="F:ATP binding"/>
    <property type="evidence" value="ECO:0007669"/>
    <property type="project" value="UniProtKB-KW"/>
</dbReference>
<dbReference type="GO" id="GO:0046872">
    <property type="term" value="F:metal ion binding"/>
    <property type="evidence" value="ECO:0007669"/>
    <property type="project" value="UniProtKB-KW"/>
</dbReference>
<dbReference type="GO" id="GO:0004618">
    <property type="term" value="F:phosphoglycerate kinase activity"/>
    <property type="evidence" value="ECO:0007669"/>
    <property type="project" value="UniProtKB-EC"/>
</dbReference>
<dbReference type="GO" id="GO:0006094">
    <property type="term" value="P:gluconeogenesis"/>
    <property type="evidence" value="ECO:0007669"/>
    <property type="project" value="TreeGrafter"/>
</dbReference>
<dbReference type="GO" id="GO:0006096">
    <property type="term" value="P:glycolytic process"/>
    <property type="evidence" value="ECO:0007669"/>
    <property type="project" value="UniProtKB-UniPathway"/>
</dbReference>
<dbReference type="CDD" id="cd00318">
    <property type="entry name" value="Phosphoglycerate_kinase"/>
    <property type="match status" value="1"/>
</dbReference>
<dbReference type="FunFam" id="3.40.50.1260:FF:000019">
    <property type="entry name" value="Phosphoglycerate kinase 1"/>
    <property type="match status" value="1"/>
</dbReference>
<dbReference type="FunFam" id="3.40.50.1260:FF:000031">
    <property type="entry name" value="Phosphoglycerate kinase 1"/>
    <property type="match status" value="1"/>
</dbReference>
<dbReference type="Gene3D" id="3.40.50.1260">
    <property type="entry name" value="Phosphoglycerate kinase, N-terminal domain"/>
    <property type="match status" value="3"/>
</dbReference>
<dbReference type="HAMAP" id="MF_00145">
    <property type="entry name" value="Phosphoglyc_kinase"/>
    <property type="match status" value="1"/>
</dbReference>
<dbReference type="InterPro" id="IPR001576">
    <property type="entry name" value="Phosphoglycerate_kinase"/>
</dbReference>
<dbReference type="InterPro" id="IPR015911">
    <property type="entry name" value="Phosphoglycerate_kinase_CS"/>
</dbReference>
<dbReference type="InterPro" id="IPR015824">
    <property type="entry name" value="Phosphoglycerate_kinase_N"/>
</dbReference>
<dbReference type="InterPro" id="IPR036043">
    <property type="entry name" value="Phosphoglycerate_kinase_sf"/>
</dbReference>
<dbReference type="PANTHER" id="PTHR11406">
    <property type="entry name" value="PHOSPHOGLYCERATE KINASE"/>
    <property type="match status" value="1"/>
</dbReference>
<dbReference type="PANTHER" id="PTHR11406:SF0">
    <property type="entry name" value="PHOSPHOGLYCERATE KINASE"/>
    <property type="match status" value="1"/>
</dbReference>
<dbReference type="Pfam" id="PF00162">
    <property type="entry name" value="PGK"/>
    <property type="match status" value="1"/>
</dbReference>
<dbReference type="PIRSF" id="PIRSF000724">
    <property type="entry name" value="Pgk"/>
    <property type="match status" value="1"/>
</dbReference>
<dbReference type="PRINTS" id="PR00477">
    <property type="entry name" value="PHGLYCKINASE"/>
</dbReference>
<dbReference type="SUPFAM" id="SSF53748">
    <property type="entry name" value="Phosphoglycerate kinase"/>
    <property type="match status" value="1"/>
</dbReference>
<dbReference type="PROSITE" id="PS00111">
    <property type="entry name" value="PGLYCERATE_KINASE"/>
    <property type="match status" value="1"/>
</dbReference>
<sequence>MSLSNKLPVTDVDLKGKRVLIRVDFNVPLDENENVTNPQRIVGALPTIKYAIDNGRKAVVLMSHLGRPDGKVNPKYSLKPVVPVLEELLGKSVTFTEDCIGPQTEETVNKASDGQVILLENLRFHAEEEGSSKDAEGKKVKADKADVDRSASLTALGDVYVNDAFGTAQRAHSSMVGVDLPQKAAGFLVKKELEYFAKALESPARPFLAILGGAKVSDKIPVIDNLLPKVNSLIIIGGMALTFKKTLENVKIGNSLFDEAGSKILGEIVEKAKKHNVEIVLPVDYVTADKFSADATVGSATTQRIPDGYMGSDVGPESVKLYQKTIAEAKTILWNGPPGVFELKPSPRPTEATLDAAVKAAESGSIVIIGGGDTATVAAKYKAEDKISHVSTGGGASLELLEGKELPGVAALSSK</sequence>
<accession>P09188</accession>
<accession>Q96VH6</accession>
<keyword id="KW-0067">ATP-binding</keyword>
<keyword id="KW-0963">Cytoplasm</keyword>
<keyword id="KW-0324">Glycolysis</keyword>
<keyword id="KW-0418">Kinase</keyword>
<keyword id="KW-0460">Magnesium</keyword>
<keyword id="KW-0479">Metal-binding</keyword>
<keyword id="KW-0496">Mitochondrion</keyword>
<keyword id="KW-0547">Nucleotide-binding</keyword>
<keyword id="KW-0808">Transferase</keyword>
<comment type="function">
    <text evidence="1 2 3">Catalyzes one of the two ATP producing reactions in the glycolytic pathway via the reversible conversion of 1,3-diphosphoglycerate to 3-phosphoglycerate (By similarity). Both L- and D- forms of purine and pyrimidine nucleotides can be used as substrates, but the activity is much lower on pyrimidines (By similarity). Negatively regulates the biosynthesis of acetyl-CoA from pyruvate in the mitochondrion (By similarity).</text>
</comment>
<comment type="catalytic activity">
    <reaction evidence="3">
        <text>(2R)-3-phosphoglycerate + ATP = (2R)-3-phospho-glyceroyl phosphate + ADP</text>
        <dbReference type="Rhea" id="RHEA:14801"/>
        <dbReference type="ChEBI" id="CHEBI:30616"/>
        <dbReference type="ChEBI" id="CHEBI:57604"/>
        <dbReference type="ChEBI" id="CHEBI:58272"/>
        <dbReference type="ChEBI" id="CHEBI:456216"/>
        <dbReference type="EC" id="2.7.2.3"/>
    </reaction>
</comment>
<comment type="cofactor">
    <cofactor evidence="2">
        <name>Mg(2+)</name>
        <dbReference type="ChEBI" id="CHEBI:18420"/>
    </cofactor>
</comment>
<comment type="pathway">
    <text evidence="3">Carbohydrate degradation; glycolysis; pyruvate from D-glyceraldehyde 3-phosphate: step 2/5.</text>
</comment>
<comment type="subunit">
    <text>Monomer.</text>
</comment>
<comment type="subcellular location">
    <subcellularLocation>
        <location evidence="3">Cytoplasm</location>
    </subcellularLocation>
    <subcellularLocation>
        <location evidence="3">Mitochondrion</location>
    </subcellularLocation>
</comment>
<comment type="similarity">
    <text evidence="5">Belongs to the phosphoglycerate kinase family.</text>
</comment>
<feature type="chain" id="PRO_0000145884" description="Phosphoglycerate kinase">
    <location>
        <begin position="1"/>
        <end position="415"/>
    </location>
</feature>
<feature type="binding site" evidence="2">
    <location>
        <position position="23"/>
    </location>
    <ligand>
        <name>(2R)-3-phosphoglycerate</name>
        <dbReference type="ChEBI" id="CHEBI:58272"/>
    </ligand>
</feature>
<feature type="binding site" evidence="4">
    <location>
        <position position="24"/>
    </location>
    <ligand>
        <name>(2R)-3-phosphoglycerate</name>
        <dbReference type="ChEBI" id="CHEBI:58272"/>
    </ligand>
</feature>
<feature type="binding site" evidence="2">
    <location>
        <position position="25"/>
    </location>
    <ligand>
        <name>(2R)-3-phosphoglycerate</name>
        <dbReference type="ChEBI" id="CHEBI:58272"/>
    </ligand>
</feature>
<feature type="binding site" evidence="4">
    <location>
        <position position="26"/>
    </location>
    <ligand>
        <name>(2R)-3-phosphoglycerate</name>
        <dbReference type="ChEBI" id="CHEBI:58272"/>
    </ligand>
</feature>
<feature type="binding site" evidence="2">
    <location>
        <position position="39"/>
    </location>
    <ligand>
        <name>(2R)-3-phosphoglycerate</name>
        <dbReference type="ChEBI" id="CHEBI:58272"/>
    </ligand>
</feature>
<feature type="binding site" evidence="4">
    <location>
        <position position="40"/>
    </location>
    <ligand>
        <name>(2R)-3-phosphoglycerate</name>
        <dbReference type="ChEBI" id="CHEBI:58272"/>
    </ligand>
</feature>
<feature type="binding site" evidence="2">
    <location>
        <position position="63"/>
    </location>
    <ligand>
        <name>(2R)-3-phosphoglycerate</name>
        <dbReference type="ChEBI" id="CHEBI:58272"/>
    </ligand>
</feature>
<feature type="binding site" evidence="4">
    <location>
        <position position="64"/>
    </location>
    <ligand>
        <name>(2R)-3-phosphoglycerate</name>
        <dbReference type="ChEBI" id="CHEBI:58272"/>
    </ligand>
</feature>
<feature type="binding site" evidence="2">
    <location>
        <position position="66"/>
    </location>
    <ligand>
        <name>(2R)-3-phosphoglycerate</name>
        <dbReference type="ChEBI" id="CHEBI:58272"/>
    </ligand>
</feature>
<feature type="binding site" evidence="4">
    <location>
        <position position="67"/>
    </location>
    <ligand>
        <name>(2R)-3-phosphoglycerate</name>
        <dbReference type="ChEBI" id="CHEBI:58272"/>
    </ligand>
</feature>
<feature type="binding site" evidence="2">
    <location>
        <position position="122"/>
    </location>
    <ligand>
        <name>(2R)-3-phosphoglycerate</name>
        <dbReference type="ChEBI" id="CHEBI:58272"/>
    </ligand>
</feature>
<feature type="binding site" evidence="4">
    <location>
        <position position="123"/>
    </location>
    <ligand>
        <name>(2R)-3-phosphoglycerate</name>
        <dbReference type="ChEBI" id="CHEBI:58272"/>
    </ligand>
</feature>
<feature type="binding site" evidence="4">
    <location>
        <position position="170"/>
    </location>
    <ligand>
        <name>(2R)-3-phosphoglycerate</name>
        <dbReference type="ChEBI" id="CHEBI:58272"/>
    </ligand>
</feature>
<feature type="binding site" evidence="2">
    <location>
        <position position="213"/>
    </location>
    <ligand>
        <name>ADP</name>
        <dbReference type="ChEBI" id="CHEBI:456216"/>
    </ligand>
</feature>
<feature type="binding site" evidence="2">
    <location>
        <position position="213"/>
    </location>
    <ligand>
        <name>CDP</name>
        <dbReference type="ChEBI" id="CHEBI:58069"/>
    </ligand>
</feature>
<feature type="binding site" evidence="4">
    <location>
        <position position="214"/>
    </location>
    <ligand>
        <name>AMP</name>
        <dbReference type="ChEBI" id="CHEBI:456215"/>
    </ligand>
</feature>
<feature type="binding site" evidence="4">
    <location>
        <position position="214"/>
    </location>
    <ligand>
        <name>ATP</name>
        <dbReference type="ChEBI" id="CHEBI:30616"/>
    </ligand>
</feature>
<feature type="binding site" evidence="2">
    <location>
        <position position="214"/>
    </location>
    <ligand>
        <name>Mg(2+)</name>
        <dbReference type="ChEBI" id="CHEBI:18420"/>
    </ligand>
</feature>
<feature type="binding site" evidence="4">
    <location>
        <position position="215"/>
    </location>
    <ligand>
        <name>AMP</name>
        <dbReference type="ChEBI" id="CHEBI:456215"/>
    </ligand>
</feature>
<feature type="binding site" evidence="2">
    <location>
        <position position="218"/>
    </location>
    <ligand>
        <name>CDP</name>
        <dbReference type="ChEBI" id="CHEBI:58069"/>
    </ligand>
</feature>
<feature type="binding site" evidence="2">
    <location>
        <position position="218"/>
    </location>
    <ligand>
        <name>Mg(2+)</name>
        <dbReference type="ChEBI" id="CHEBI:18420"/>
    </ligand>
</feature>
<feature type="binding site" evidence="4">
    <location>
        <position position="219"/>
    </location>
    <ligand>
        <name>AMP</name>
        <dbReference type="ChEBI" id="CHEBI:456215"/>
    </ligand>
</feature>
<feature type="binding site" evidence="4">
    <location>
        <position position="219"/>
    </location>
    <ligand>
        <name>ATP</name>
        <dbReference type="ChEBI" id="CHEBI:30616"/>
    </ligand>
</feature>
<feature type="binding site" evidence="2">
    <location>
        <position position="237"/>
    </location>
    <ligand>
        <name>ADP</name>
        <dbReference type="ChEBI" id="CHEBI:456216"/>
    </ligand>
</feature>
<feature type="binding site" evidence="2">
    <location>
        <position position="237"/>
    </location>
    <ligand>
        <name>CDP</name>
        <dbReference type="ChEBI" id="CHEBI:58069"/>
    </ligand>
</feature>
<feature type="binding site" evidence="4">
    <location>
        <position position="238"/>
    </location>
    <ligand>
        <name>AMP</name>
        <dbReference type="ChEBI" id="CHEBI:456215"/>
    </ligand>
</feature>
<feature type="binding site" evidence="4">
    <location>
        <position position="238"/>
    </location>
    <ligand>
        <name>ATP</name>
        <dbReference type="ChEBI" id="CHEBI:30616"/>
    </ligand>
</feature>
<feature type="binding site" evidence="4">
    <location>
        <position position="311"/>
    </location>
    <ligand>
        <name>AMP</name>
        <dbReference type="ChEBI" id="CHEBI:456215"/>
    </ligand>
</feature>
<feature type="binding site" evidence="4">
    <location>
        <position position="311"/>
    </location>
    <ligand>
        <name>ATP</name>
        <dbReference type="ChEBI" id="CHEBI:30616"/>
    </ligand>
</feature>
<feature type="binding site" evidence="2">
    <location>
        <position position="336"/>
    </location>
    <ligand>
        <name>CDP</name>
        <dbReference type="ChEBI" id="CHEBI:58069"/>
    </ligand>
</feature>
<feature type="binding site" evidence="2">
    <location>
        <position position="341"/>
    </location>
    <ligand>
        <name>ADP</name>
        <dbReference type="ChEBI" id="CHEBI:456216"/>
    </ligand>
</feature>
<feature type="binding site" evidence="2">
    <location>
        <position position="341"/>
    </location>
    <ligand>
        <name>CDP</name>
        <dbReference type="ChEBI" id="CHEBI:58069"/>
    </ligand>
</feature>
<feature type="binding site" evidence="4">
    <location>
        <position position="342"/>
    </location>
    <ligand>
        <name>AMP</name>
        <dbReference type="ChEBI" id="CHEBI:456215"/>
    </ligand>
</feature>
<feature type="binding site" evidence="4">
    <location>
        <position position="342"/>
    </location>
    <ligand>
        <name>ATP</name>
        <dbReference type="ChEBI" id="CHEBI:30616"/>
    </ligand>
</feature>
<feature type="binding site" evidence="4">
    <location>
        <position position="373"/>
    </location>
    <ligand>
        <name>ATP</name>
        <dbReference type="ChEBI" id="CHEBI:30616"/>
    </ligand>
</feature>
<feature type="binding site" evidence="4">
    <location>
        <position position="373"/>
    </location>
    <ligand>
        <name>Mg(2+)</name>
        <dbReference type="ChEBI" id="CHEBI:18420"/>
    </ligand>
</feature>
<feature type="binding site" evidence="4">
    <location>
        <position position="374"/>
    </location>
    <ligand>
        <name>ATP</name>
        <dbReference type="ChEBI" id="CHEBI:30616"/>
    </ligand>
</feature>
<gene>
    <name type="primary">PGKA</name>
    <name type="synonym">PGK</name>
</gene>
<proteinExistence type="inferred from homology"/>